<proteinExistence type="inferred from homology"/>
<gene>
    <name evidence="1" type="primary">lacB</name>
    <name type="ordered locus">SAR2285</name>
</gene>
<reference key="1">
    <citation type="journal article" date="2004" name="Proc. Natl. Acad. Sci. U.S.A.">
        <title>Complete genomes of two clinical Staphylococcus aureus strains: evidence for the rapid evolution of virulence and drug resistance.</title>
        <authorList>
            <person name="Holden M.T.G."/>
            <person name="Feil E.J."/>
            <person name="Lindsay J.A."/>
            <person name="Peacock S.J."/>
            <person name="Day N.P.J."/>
            <person name="Enright M.C."/>
            <person name="Foster T.J."/>
            <person name="Moore C.E."/>
            <person name="Hurst L."/>
            <person name="Atkin R."/>
            <person name="Barron A."/>
            <person name="Bason N."/>
            <person name="Bentley S.D."/>
            <person name="Chillingworth C."/>
            <person name="Chillingworth T."/>
            <person name="Churcher C."/>
            <person name="Clark L."/>
            <person name="Corton C."/>
            <person name="Cronin A."/>
            <person name="Doggett J."/>
            <person name="Dowd L."/>
            <person name="Feltwell T."/>
            <person name="Hance Z."/>
            <person name="Harris B."/>
            <person name="Hauser H."/>
            <person name="Holroyd S."/>
            <person name="Jagels K."/>
            <person name="James K.D."/>
            <person name="Lennard N."/>
            <person name="Line A."/>
            <person name="Mayes R."/>
            <person name="Moule S."/>
            <person name="Mungall K."/>
            <person name="Ormond D."/>
            <person name="Quail M.A."/>
            <person name="Rabbinowitsch E."/>
            <person name="Rutherford K.M."/>
            <person name="Sanders M."/>
            <person name="Sharp S."/>
            <person name="Simmonds M."/>
            <person name="Stevens K."/>
            <person name="Whitehead S."/>
            <person name="Barrell B.G."/>
            <person name="Spratt B.G."/>
            <person name="Parkhill J."/>
        </authorList>
    </citation>
    <scope>NUCLEOTIDE SEQUENCE [LARGE SCALE GENOMIC DNA]</scope>
    <source>
        <strain>MRSA252</strain>
    </source>
</reference>
<dbReference type="EC" id="5.3.1.26" evidence="1"/>
<dbReference type="EMBL" id="BX571856">
    <property type="protein sequence ID" value="CAG41263.1"/>
    <property type="molecule type" value="Genomic_DNA"/>
</dbReference>
<dbReference type="RefSeq" id="WP_000684746.1">
    <property type="nucleotide sequence ID" value="NC_002952.2"/>
</dbReference>
<dbReference type="SMR" id="Q6GEN5"/>
<dbReference type="KEGG" id="sar:SAR2285"/>
<dbReference type="HOGENOM" id="CLU_091396_2_0_9"/>
<dbReference type="UniPathway" id="UPA00702">
    <property type="reaction ID" value="UER00714"/>
</dbReference>
<dbReference type="Proteomes" id="UP000000596">
    <property type="component" value="Chromosome"/>
</dbReference>
<dbReference type="GO" id="GO:0050044">
    <property type="term" value="F:galactose-6-phosphate isomerase activity"/>
    <property type="evidence" value="ECO:0007669"/>
    <property type="project" value="UniProtKB-UniRule"/>
</dbReference>
<dbReference type="GO" id="GO:0004751">
    <property type="term" value="F:ribose-5-phosphate isomerase activity"/>
    <property type="evidence" value="ECO:0007669"/>
    <property type="project" value="TreeGrafter"/>
</dbReference>
<dbReference type="GO" id="GO:0019316">
    <property type="term" value="P:D-allose catabolic process"/>
    <property type="evidence" value="ECO:0007669"/>
    <property type="project" value="TreeGrafter"/>
</dbReference>
<dbReference type="GO" id="GO:0019388">
    <property type="term" value="P:galactose catabolic process"/>
    <property type="evidence" value="ECO:0007669"/>
    <property type="project" value="UniProtKB-UniPathway"/>
</dbReference>
<dbReference type="GO" id="GO:0019512">
    <property type="term" value="P:lactose catabolic process via tagatose-6-phosphate"/>
    <property type="evidence" value="ECO:0007669"/>
    <property type="project" value="UniProtKB-UniRule"/>
</dbReference>
<dbReference type="GO" id="GO:0009052">
    <property type="term" value="P:pentose-phosphate shunt, non-oxidative branch"/>
    <property type="evidence" value="ECO:0007669"/>
    <property type="project" value="TreeGrafter"/>
</dbReference>
<dbReference type="Gene3D" id="3.40.1400.10">
    <property type="entry name" value="Sugar-phosphate isomerase, RpiB/LacA/LacB"/>
    <property type="match status" value="1"/>
</dbReference>
<dbReference type="HAMAP" id="MF_01556">
    <property type="entry name" value="LacB"/>
    <property type="match status" value="1"/>
</dbReference>
<dbReference type="InterPro" id="IPR004784">
    <property type="entry name" value="LacB"/>
</dbReference>
<dbReference type="InterPro" id="IPR003500">
    <property type="entry name" value="RpiB_LacA_LacB"/>
</dbReference>
<dbReference type="InterPro" id="IPR036569">
    <property type="entry name" value="RpiB_LacA_LacB_sf"/>
</dbReference>
<dbReference type="NCBIfam" id="TIGR01119">
    <property type="entry name" value="lacB"/>
    <property type="match status" value="1"/>
</dbReference>
<dbReference type="NCBIfam" id="NF004051">
    <property type="entry name" value="PRK05571.1"/>
    <property type="match status" value="1"/>
</dbReference>
<dbReference type="NCBIfam" id="NF006381">
    <property type="entry name" value="PRK08622.1"/>
    <property type="match status" value="1"/>
</dbReference>
<dbReference type="NCBIfam" id="NF009258">
    <property type="entry name" value="PRK12615.1"/>
    <property type="match status" value="1"/>
</dbReference>
<dbReference type="NCBIfam" id="TIGR00689">
    <property type="entry name" value="rpiB_lacA_lacB"/>
    <property type="match status" value="1"/>
</dbReference>
<dbReference type="PANTHER" id="PTHR30345:SF0">
    <property type="entry name" value="DNA DAMAGE-REPAIR_TOLERATION PROTEIN DRT102"/>
    <property type="match status" value="1"/>
</dbReference>
<dbReference type="PANTHER" id="PTHR30345">
    <property type="entry name" value="RIBOSE-5-PHOSPHATE ISOMERASE B"/>
    <property type="match status" value="1"/>
</dbReference>
<dbReference type="Pfam" id="PF02502">
    <property type="entry name" value="LacAB_rpiB"/>
    <property type="match status" value="1"/>
</dbReference>
<dbReference type="PIRSF" id="PIRSF005384">
    <property type="entry name" value="RpiB_LacA_B"/>
    <property type="match status" value="1"/>
</dbReference>
<dbReference type="SUPFAM" id="SSF89623">
    <property type="entry name" value="Ribose/Galactose isomerase RpiB/AlsB"/>
    <property type="match status" value="1"/>
</dbReference>
<comment type="catalytic activity">
    <reaction evidence="1">
        <text>aldehydo-D-galactose 6-phosphate = keto-D-tagatose 6-phosphate</text>
        <dbReference type="Rhea" id="RHEA:13033"/>
        <dbReference type="ChEBI" id="CHEBI:58255"/>
        <dbReference type="ChEBI" id="CHEBI:134283"/>
        <dbReference type="EC" id="5.3.1.26"/>
    </reaction>
</comment>
<comment type="pathway">
    <text evidence="1">Carbohydrate metabolism; D-galactose 6-phosphate degradation; D-tagatose 6-phosphate from D-galactose 6-phosphate: step 1/1.</text>
</comment>
<comment type="subunit">
    <text evidence="1">Heteromultimeric protein consisting of LacA and LacB.</text>
</comment>
<comment type="similarity">
    <text evidence="1">Belongs to the LacAB/RpiB family.</text>
</comment>
<sequence>MKIALGCDHIVTDTKMRVSEFLKSKGHEVIDVGTYDFTRTHYPIFGKKVGEQVVSGNADLGVCICGTGVGINNAVNKVPGVRSALVRDMTSALYAKEELNANVIGFGGRIIGELLMCDIIDAFINAEYKPTEENKKLIAKIKHLETSNADQADPHFFDEFLEKWDRGEYHD</sequence>
<organism>
    <name type="scientific">Staphylococcus aureus (strain MRSA252)</name>
    <dbReference type="NCBI Taxonomy" id="282458"/>
    <lineage>
        <taxon>Bacteria</taxon>
        <taxon>Bacillati</taxon>
        <taxon>Bacillota</taxon>
        <taxon>Bacilli</taxon>
        <taxon>Bacillales</taxon>
        <taxon>Staphylococcaceae</taxon>
        <taxon>Staphylococcus</taxon>
    </lineage>
</organism>
<accession>Q6GEN5</accession>
<feature type="chain" id="PRO_0000208138" description="Galactose-6-phosphate isomerase subunit LacB">
    <location>
        <begin position="1"/>
        <end position="171"/>
    </location>
</feature>
<name>LACB_STAAR</name>
<keyword id="KW-0413">Isomerase</keyword>
<keyword id="KW-0423">Lactose metabolism</keyword>
<protein>
    <recommendedName>
        <fullName evidence="1">Galactose-6-phosphate isomerase subunit LacB</fullName>
        <ecNumber evidence="1">5.3.1.26</ecNumber>
    </recommendedName>
</protein>
<evidence type="ECO:0000255" key="1">
    <source>
        <dbReference type="HAMAP-Rule" id="MF_01556"/>
    </source>
</evidence>